<protein>
    <recommendedName>
        <fullName evidence="1">Glutamine--fructose-6-phosphate aminotransferase [isomerizing]</fullName>
        <ecNumber evidence="1">2.6.1.16</ecNumber>
    </recommendedName>
    <alternativeName>
        <fullName evidence="1">D-fructose-6-phosphate amidotransferase</fullName>
    </alternativeName>
    <alternativeName>
        <fullName evidence="1">GFAT</fullName>
    </alternativeName>
    <alternativeName>
        <fullName evidence="1">Glucosamine-6-phosphate synthase</fullName>
    </alternativeName>
    <alternativeName>
        <fullName evidence="1">Hexosephosphate aminotransferase</fullName>
    </alternativeName>
    <alternativeName>
        <fullName evidence="1">L-glutamine--D-fructose-6-phosphate amidotransferase</fullName>
    </alternativeName>
</protein>
<dbReference type="EC" id="2.6.1.16" evidence="1"/>
<dbReference type="EMBL" id="BA000017">
    <property type="protein sequence ID" value="BAB58316.1"/>
    <property type="molecule type" value="Genomic_DNA"/>
</dbReference>
<dbReference type="RefSeq" id="WP_000334463.1">
    <property type="nucleotide sequence ID" value="NC_002758.2"/>
</dbReference>
<dbReference type="SMR" id="P64227"/>
<dbReference type="KEGG" id="sav:SAV2154"/>
<dbReference type="HOGENOM" id="CLU_012520_7_1_9"/>
<dbReference type="PhylomeDB" id="P64227"/>
<dbReference type="Proteomes" id="UP000002481">
    <property type="component" value="Chromosome"/>
</dbReference>
<dbReference type="GO" id="GO:0005829">
    <property type="term" value="C:cytosol"/>
    <property type="evidence" value="ECO:0007669"/>
    <property type="project" value="TreeGrafter"/>
</dbReference>
<dbReference type="GO" id="GO:0097367">
    <property type="term" value="F:carbohydrate derivative binding"/>
    <property type="evidence" value="ECO:0007669"/>
    <property type="project" value="InterPro"/>
</dbReference>
<dbReference type="GO" id="GO:0004360">
    <property type="term" value="F:glutamine-fructose-6-phosphate transaminase (isomerizing) activity"/>
    <property type="evidence" value="ECO:0007669"/>
    <property type="project" value="UniProtKB-UniRule"/>
</dbReference>
<dbReference type="GO" id="GO:0005975">
    <property type="term" value="P:carbohydrate metabolic process"/>
    <property type="evidence" value="ECO:0007669"/>
    <property type="project" value="UniProtKB-UniRule"/>
</dbReference>
<dbReference type="GO" id="GO:0006002">
    <property type="term" value="P:fructose 6-phosphate metabolic process"/>
    <property type="evidence" value="ECO:0007669"/>
    <property type="project" value="TreeGrafter"/>
</dbReference>
<dbReference type="GO" id="GO:0006487">
    <property type="term" value="P:protein N-linked glycosylation"/>
    <property type="evidence" value="ECO:0007669"/>
    <property type="project" value="TreeGrafter"/>
</dbReference>
<dbReference type="GO" id="GO:0006047">
    <property type="term" value="P:UDP-N-acetylglucosamine metabolic process"/>
    <property type="evidence" value="ECO:0007669"/>
    <property type="project" value="TreeGrafter"/>
</dbReference>
<dbReference type="CDD" id="cd00714">
    <property type="entry name" value="GFAT"/>
    <property type="match status" value="1"/>
</dbReference>
<dbReference type="CDD" id="cd05008">
    <property type="entry name" value="SIS_GlmS_GlmD_1"/>
    <property type="match status" value="1"/>
</dbReference>
<dbReference type="CDD" id="cd05009">
    <property type="entry name" value="SIS_GlmS_GlmD_2"/>
    <property type="match status" value="1"/>
</dbReference>
<dbReference type="FunFam" id="3.40.50.10490:FF:000001">
    <property type="entry name" value="Glutamine--fructose-6-phosphate aminotransferase [isomerizing]"/>
    <property type="match status" value="1"/>
</dbReference>
<dbReference type="FunFam" id="3.40.50.10490:FF:000022">
    <property type="entry name" value="Glutamine--fructose-6-phosphate aminotransferase [isomerizing]"/>
    <property type="match status" value="1"/>
</dbReference>
<dbReference type="FunFam" id="3.60.20.10:FF:000006">
    <property type="entry name" value="Glutamine--fructose-6-phosphate aminotransferase [isomerizing]"/>
    <property type="match status" value="1"/>
</dbReference>
<dbReference type="Gene3D" id="3.40.50.10490">
    <property type="entry name" value="Glucose-6-phosphate isomerase like protein, domain 1"/>
    <property type="match status" value="2"/>
</dbReference>
<dbReference type="Gene3D" id="3.60.20.10">
    <property type="entry name" value="Glutamine Phosphoribosylpyrophosphate, subunit 1, domain 1"/>
    <property type="match status" value="1"/>
</dbReference>
<dbReference type="HAMAP" id="MF_00164">
    <property type="entry name" value="GlmS"/>
    <property type="match status" value="1"/>
</dbReference>
<dbReference type="InterPro" id="IPR017932">
    <property type="entry name" value="GATase_2_dom"/>
</dbReference>
<dbReference type="InterPro" id="IPR005855">
    <property type="entry name" value="GFAT"/>
</dbReference>
<dbReference type="InterPro" id="IPR047084">
    <property type="entry name" value="GFAT_N"/>
</dbReference>
<dbReference type="InterPro" id="IPR035466">
    <property type="entry name" value="GlmS/AgaS_SIS"/>
</dbReference>
<dbReference type="InterPro" id="IPR035490">
    <property type="entry name" value="GlmS/FrlB_SIS"/>
</dbReference>
<dbReference type="InterPro" id="IPR029055">
    <property type="entry name" value="Ntn_hydrolases_N"/>
</dbReference>
<dbReference type="InterPro" id="IPR001347">
    <property type="entry name" value="SIS_dom"/>
</dbReference>
<dbReference type="InterPro" id="IPR046348">
    <property type="entry name" value="SIS_dom_sf"/>
</dbReference>
<dbReference type="NCBIfam" id="TIGR01135">
    <property type="entry name" value="glmS"/>
    <property type="match status" value="1"/>
</dbReference>
<dbReference type="NCBIfam" id="NF001484">
    <property type="entry name" value="PRK00331.1"/>
    <property type="match status" value="1"/>
</dbReference>
<dbReference type="PANTHER" id="PTHR10937">
    <property type="entry name" value="GLUCOSAMINE--FRUCTOSE-6-PHOSPHATE AMINOTRANSFERASE, ISOMERIZING"/>
    <property type="match status" value="1"/>
</dbReference>
<dbReference type="PANTHER" id="PTHR10937:SF0">
    <property type="entry name" value="GLUTAMINE--FRUCTOSE-6-PHOSPHATE TRANSAMINASE (ISOMERIZING)"/>
    <property type="match status" value="1"/>
</dbReference>
<dbReference type="Pfam" id="PF13522">
    <property type="entry name" value="GATase_6"/>
    <property type="match status" value="1"/>
</dbReference>
<dbReference type="Pfam" id="PF01380">
    <property type="entry name" value="SIS"/>
    <property type="match status" value="2"/>
</dbReference>
<dbReference type="SUPFAM" id="SSF56235">
    <property type="entry name" value="N-terminal nucleophile aminohydrolases (Ntn hydrolases)"/>
    <property type="match status" value="1"/>
</dbReference>
<dbReference type="SUPFAM" id="SSF53697">
    <property type="entry name" value="SIS domain"/>
    <property type="match status" value="1"/>
</dbReference>
<dbReference type="PROSITE" id="PS51278">
    <property type="entry name" value="GATASE_TYPE_2"/>
    <property type="match status" value="1"/>
</dbReference>
<dbReference type="PROSITE" id="PS51464">
    <property type="entry name" value="SIS"/>
    <property type="match status" value="2"/>
</dbReference>
<reference key="1">
    <citation type="journal article" date="2001" name="Lancet">
        <title>Whole genome sequencing of meticillin-resistant Staphylococcus aureus.</title>
        <authorList>
            <person name="Kuroda M."/>
            <person name="Ohta T."/>
            <person name="Uchiyama I."/>
            <person name="Baba T."/>
            <person name="Yuzawa H."/>
            <person name="Kobayashi I."/>
            <person name="Cui L."/>
            <person name="Oguchi A."/>
            <person name="Aoki K."/>
            <person name="Nagai Y."/>
            <person name="Lian J.-Q."/>
            <person name="Ito T."/>
            <person name="Kanamori M."/>
            <person name="Matsumaru H."/>
            <person name="Maruyama A."/>
            <person name="Murakami H."/>
            <person name="Hosoyama A."/>
            <person name="Mizutani-Ui Y."/>
            <person name="Takahashi N.K."/>
            <person name="Sawano T."/>
            <person name="Inoue R."/>
            <person name="Kaito C."/>
            <person name="Sekimizu K."/>
            <person name="Hirakawa H."/>
            <person name="Kuhara S."/>
            <person name="Goto S."/>
            <person name="Yabuzaki J."/>
            <person name="Kanehisa M."/>
            <person name="Yamashita A."/>
            <person name="Oshima K."/>
            <person name="Furuya K."/>
            <person name="Yoshino C."/>
            <person name="Shiba T."/>
            <person name="Hattori M."/>
            <person name="Ogasawara N."/>
            <person name="Hayashi H."/>
            <person name="Hiramatsu K."/>
        </authorList>
    </citation>
    <scope>NUCLEOTIDE SEQUENCE [LARGE SCALE GENOMIC DNA]</scope>
    <source>
        <strain>Mu50 / ATCC 700699</strain>
    </source>
</reference>
<gene>
    <name evidence="1" type="primary">glmS</name>
    <name type="ordered locus">SAV2154</name>
</gene>
<comment type="function">
    <text evidence="1">Catalyzes the first step in hexosamine metabolism, converting fructose-6P into glucosamine-6P using glutamine as a nitrogen source.</text>
</comment>
<comment type="catalytic activity">
    <reaction evidence="1">
        <text>D-fructose 6-phosphate + L-glutamine = D-glucosamine 6-phosphate + L-glutamate</text>
        <dbReference type="Rhea" id="RHEA:13237"/>
        <dbReference type="ChEBI" id="CHEBI:29985"/>
        <dbReference type="ChEBI" id="CHEBI:58359"/>
        <dbReference type="ChEBI" id="CHEBI:58725"/>
        <dbReference type="ChEBI" id="CHEBI:61527"/>
        <dbReference type="EC" id="2.6.1.16"/>
    </reaction>
</comment>
<comment type="subunit">
    <text evidence="1">Homodimer.</text>
</comment>
<comment type="subcellular location">
    <subcellularLocation>
        <location evidence="1">Cytoplasm</location>
    </subcellularLocation>
</comment>
<name>GLMS_STAAM</name>
<feature type="initiator methionine" description="Removed" evidence="1">
    <location>
        <position position="1"/>
    </location>
</feature>
<feature type="chain" id="PRO_0000135380" description="Glutamine--fructose-6-phosphate aminotransferase [isomerizing]">
    <location>
        <begin position="2"/>
        <end position="601"/>
    </location>
</feature>
<feature type="domain" description="Glutamine amidotransferase type-2" evidence="1">
    <location>
        <begin position="2"/>
        <end position="218"/>
    </location>
</feature>
<feature type="domain" description="SIS 1" evidence="1">
    <location>
        <begin position="284"/>
        <end position="423"/>
    </location>
</feature>
<feature type="domain" description="SIS 2" evidence="1">
    <location>
        <begin position="453"/>
        <end position="591"/>
    </location>
</feature>
<feature type="active site" description="Nucleophile; for GATase activity" evidence="1">
    <location>
        <position position="2"/>
    </location>
</feature>
<feature type="active site" description="For Fru-6P isomerization activity" evidence="1">
    <location>
        <position position="596"/>
    </location>
</feature>
<accession>P64227</accession>
<accession>Q99SA5</accession>
<evidence type="ECO:0000255" key="1">
    <source>
        <dbReference type="HAMAP-Rule" id="MF_00164"/>
    </source>
</evidence>
<proteinExistence type="inferred from homology"/>
<organism>
    <name type="scientific">Staphylococcus aureus (strain Mu50 / ATCC 700699)</name>
    <dbReference type="NCBI Taxonomy" id="158878"/>
    <lineage>
        <taxon>Bacteria</taxon>
        <taxon>Bacillati</taxon>
        <taxon>Bacillota</taxon>
        <taxon>Bacilli</taxon>
        <taxon>Bacillales</taxon>
        <taxon>Staphylococcaceae</taxon>
        <taxon>Staphylococcus</taxon>
    </lineage>
</organism>
<sequence length="601" mass="65835">MCGIVGYIGYDNAKELLLKGLEKLEYRGYDSAGIAVVNDDNTTVFKEKGRIAELRKVADSSDFDGPVGIGHTRWATHGVPNHENSHPHQSSNGRFTLVHNGVIENYEELKGEYLQGVSFISETDTEVIVQLVEYFSNQGLSTEEAFTKVVSLLHGSYALGLLDAEDKDTIYVAKNKSPLLLGVGEGFNVIASDALAMLQVTSEYKEIHDHEIVIVKKDEVIIKDADGNVVERDSYIAEIDASDAEKGVYAHYMLKEIHEQPAVMRRIIQEYQDAEGNLKIDQDIINDVKEADRIYVIAAGTSYHAGLVGKEFLEKWAGVPTEVHVASEFVYNMPLLSEKPLFVYISQSGETADSRAVLVETNKLGHKSLTITNVAGSTLSREADHTLLLHAGPEIAVASTKAYTAQIAVLSILSQIVAKEHGREADIDLLRELAKVTTAIEAIVDDAPIMEQIATDFLETTRNAFFIGRTIDYNVSLEGALKLKEISYIQAEGFAGGELKHGTIALIEDGTPVVALATQENVNLSIRGNVKEVVARGAHPCIISMEGLEKEGDTYVIPHVHELLTPLVSVVALQLISYYAALHRDLDVDKPRNLAKSVTVE</sequence>
<keyword id="KW-0032">Aminotransferase</keyword>
<keyword id="KW-0963">Cytoplasm</keyword>
<keyword id="KW-0315">Glutamine amidotransferase</keyword>
<keyword id="KW-0677">Repeat</keyword>
<keyword id="KW-0808">Transferase</keyword>